<name>PSBD_DAUCA</name>
<feature type="initiator methionine" description="Removed" evidence="1">
    <location>
        <position position="1"/>
    </location>
</feature>
<feature type="chain" id="PRO_0000359647" description="Photosystem II D2 protein">
    <location>
        <begin position="2"/>
        <end position="353"/>
    </location>
</feature>
<feature type="transmembrane region" description="Helical" evidence="2">
    <location>
        <begin position="41"/>
        <end position="61"/>
    </location>
</feature>
<feature type="transmembrane region" description="Helical" evidence="2">
    <location>
        <begin position="125"/>
        <end position="141"/>
    </location>
</feature>
<feature type="transmembrane region" description="Helical" evidence="2">
    <location>
        <begin position="153"/>
        <end position="166"/>
    </location>
</feature>
<feature type="transmembrane region" description="Helical" evidence="2">
    <location>
        <begin position="208"/>
        <end position="228"/>
    </location>
</feature>
<feature type="transmembrane region" description="Helical" evidence="2">
    <location>
        <begin position="279"/>
        <end position="295"/>
    </location>
</feature>
<feature type="binding site" description="axial binding residue" evidence="2">
    <location>
        <position position="118"/>
    </location>
    <ligand>
        <name>chlorophyll a</name>
        <dbReference type="ChEBI" id="CHEBI:58416"/>
        <label>ChlzD2</label>
    </ligand>
    <ligandPart>
        <name>Mg</name>
        <dbReference type="ChEBI" id="CHEBI:25107"/>
    </ligandPart>
</feature>
<feature type="binding site" evidence="2">
    <location>
        <position position="130"/>
    </location>
    <ligand>
        <name>pheophytin a</name>
        <dbReference type="ChEBI" id="CHEBI:136840"/>
        <label>D2</label>
    </ligand>
</feature>
<feature type="binding site" evidence="2">
    <location>
        <position position="143"/>
    </location>
    <ligand>
        <name>pheophytin a</name>
        <dbReference type="ChEBI" id="CHEBI:136840"/>
        <label>D2</label>
    </ligand>
</feature>
<feature type="binding site" description="axial binding residue" evidence="2">
    <location>
        <position position="198"/>
    </location>
    <ligand>
        <name>chlorophyll a</name>
        <dbReference type="ChEBI" id="CHEBI:58416"/>
        <label>PD2</label>
    </ligand>
    <ligandPart>
        <name>Mg</name>
        <dbReference type="ChEBI" id="CHEBI:25107"/>
    </ligandPart>
</feature>
<feature type="binding site" evidence="2">
    <location>
        <position position="215"/>
    </location>
    <ligand>
        <name>a plastoquinone</name>
        <dbReference type="ChEBI" id="CHEBI:17757"/>
        <label>Q(A)</label>
    </ligand>
</feature>
<feature type="binding site" evidence="2">
    <location>
        <position position="215"/>
    </location>
    <ligand>
        <name>Fe cation</name>
        <dbReference type="ChEBI" id="CHEBI:24875"/>
        <note>ligand shared with heterodimeric partner</note>
    </ligand>
</feature>
<feature type="binding site" evidence="2">
    <location>
        <position position="262"/>
    </location>
    <ligand>
        <name>a plastoquinone</name>
        <dbReference type="ChEBI" id="CHEBI:17757"/>
        <label>Q(A)</label>
    </ligand>
</feature>
<feature type="binding site" evidence="2">
    <location>
        <position position="269"/>
    </location>
    <ligand>
        <name>Fe cation</name>
        <dbReference type="ChEBI" id="CHEBI:24875"/>
        <note>ligand shared with heterodimeric partner</note>
    </ligand>
</feature>
<feature type="modified residue" description="N-acetylthreonine" evidence="1">
    <location>
        <position position="2"/>
    </location>
</feature>
<feature type="modified residue" description="Phosphothreonine" evidence="1">
    <location>
        <position position="2"/>
    </location>
</feature>
<keyword id="KW-0007">Acetylation</keyword>
<keyword id="KW-0148">Chlorophyll</keyword>
<keyword id="KW-0150">Chloroplast</keyword>
<keyword id="KW-0157">Chromophore</keyword>
<keyword id="KW-0249">Electron transport</keyword>
<keyword id="KW-0408">Iron</keyword>
<keyword id="KW-0460">Magnesium</keyword>
<keyword id="KW-0472">Membrane</keyword>
<keyword id="KW-0479">Metal-binding</keyword>
<keyword id="KW-0560">Oxidoreductase</keyword>
<keyword id="KW-0597">Phosphoprotein</keyword>
<keyword id="KW-0602">Photosynthesis</keyword>
<keyword id="KW-0604">Photosystem II</keyword>
<keyword id="KW-0934">Plastid</keyword>
<keyword id="KW-0793">Thylakoid</keyword>
<keyword id="KW-0812">Transmembrane</keyword>
<keyword id="KW-1133">Transmembrane helix</keyword>
<keyword id="KW-0813">Transport</keyword>
<gene>
    <name evidence="2" type="primary">psbD</name>
</gene>
<geneLocation type="chloroplast"/>
<protein>
    <recommendedName>
        <fullName evidence="2">Photosystem II D2 protein</fullName>
        <shortName evidence="2">PSII D2 protein</shortName>
        <ecNumber evidence="2">1.10.3.9</ecNumber>
    </recommendedName>
    <alternativeName>
        <fullName evidence="2">Photosystem Q(A) protein</fullName>
    </alternativeName>
</protein>
<organism>
    <name type="scientific">Daucus carota</name>
    <name type="common">Wild carrot</name>
    <dbReference type="NCBI Taxonomy" id="4039"/>
    <lineage>
        <taxon>Eukaryota</taxon>
        <taxon>Viridiplantae</taxon>
        <taxon>Streptophyta</taxon>
        <taxon>Embryophyta</taxon>
        <taxon>Tracheophyta</taxon>
        <taxon>Spermatophyta</taxon>
        <taxon>Magnoliopsida</taxon>
        <taxon>eudicotyledons</taxon>
        <taxon>Gunneridae</taxon>
        <taxon>Pentapetalae</taxon>
        <taxon>asterids</taxon>
        <taxon>campanulids</taxon>
        <taxon>Apiales</taxon>
        <taxon>Apiaceae</taxon>
        <taxon>Apioideae</taxon>
        <taxon>Scandiceae</taxon>
        <taxon>Daucinae</taxon>
        <taxon>Daucus</taxon>
        <taxon>Daucus sect. Daucus</taxon>
    </lineage>
</organism>
<accession>Q0G9W7</accession>
<proteinExistence type="inferred from homology"/>
<evidence type="ECO:0000250" key="1">
    <source>
        <dbReference type="UniProtKB" id="P56761"/>
    </source>
</evidence>
<evidence type="ECO:0000255" key="2">
    <source>
        <dbReference type="HAMAP-Rule" id="MF_01383"/>
    </source>
</evidence>
<reference key="1">
    <citation type="journal article" date="2006" name="BMC Genomics">
        <title>Complete plastid genome sequence of Daucus carota: implications for biotechnology and phylogeny of angiosperms.</title>
        <authorList>
            <person name="Ruhlman T."/>
            <person name="Lee S.-B."/>
            <person name="Jansen R.K."/>
            <person name="Hostetler J.B."/>
            <person name="Tallon L.J."/>
            <person name="Town C.D."/>
            <person name="Daniell H."/>
        </authorList>
    </citation>
    <scope>NUCLEOTIDE SEQUENCE [LARGE SCALE GENOMIC DNA]</scope>
    <source>
        <strain>cv. Danvers Half-long</strain>
    </source>
</reference>
<dbReference type="EC" id="1.10.3.9" evidence="2"/>
<dbReference type="EMBL" id="DQ898156">
    <property type="protein sequence ID" value="ABI32419.1"/>
    <property type="molecule type" value="Genomic_DNA"/>
</dbReference>
<dbReference type="RefSeq" id="YP_740112.1">
    <property type="nucleotide sequence ID" value="NC_008325.1"/>
</dbReference>
<dbReference type="SMR" id="Q0G9W7"/>
<dbReference type="GeneID" id="4266727"/>
<dbReference type="OMA" id="RWFQLGG"/>
<dbReference type="GO" id="GO:0009535">
    <property type="term" value="C:chloroplast thylakoid membrane"/>
    <property type="evidence" value="ECO:0007669"/>
    <property type="project" value="UniProtKB-SubCell"/>
</dbReference>
<dbReference type="GO" id="GO:0009523">
    <property type="term" value="C:photosystem II"/>
    <property type="evidence" value="ECO:0007669"/>
    <property type="project" value="UniProtKB-KW"/>
</dbReference>
<dbReference type="GO" id="GO:0016168">
    <property type="term" value="F:chlorophyll binding"/>
    <property type="evidence" value="ECO:0007669"/>
    <property type="project" value="UniProtKB-UniRule"/>
</dbReference>
<dbReference type="GO" id="GO:0045156">
    <property type="term" value="F:electron transporter, transferring electrons within the cyclic electron transport pathway of photosynthesis activity"/>
    <property type="evidence" value="ECO:0007669"/>
    <property type="project" value="InterPro"/>
</dbReference>
<dbReference type="GO" id="GO:0005506">
    <property type="term" value="F:iron ion binding"/>
    <property type="evidence" value="ECO:0007669"/>
    <property type="project" value="UniProtKB-UniRule"/>
</dbReference>
<dbReference type="GO" id="GO:0010242">
    <property type="term" value="F:oxygen evolving activity"/>
    <property type="evidence" value="ECO:0007669"/>
    <property type="project" value="UniProtKB-EC"/>
</dbReference>
<dbReference type="GO" id="GO:0009772">
    <property type="term" value="P:photosynthetic electron transport in photosystem II"/>
    <property type="evidence" value="ECO:0007669"/>
    <property type="project" value="InterPro"/>
</dbReference>
<dbReference type="CDD" id="cd09288">
    <property type="entry name" value="Photosystem-II_D2"/>
    <property type="match status" value="1"/>
</dbReference>
<dbReference type="FunFam" id="1.20.85.10:FF:000001">
    <property type="entry name" value="photosystem II D2 protein-like"/>
    <property type="match status" value="1"/>
</dbReference>
<dbReference type="Gene3D" id="1.20.85.10">
    <property type="entry name" value="Photosystem II protein D1-like"/>
    <property type="match status" value="1"/>
</dbReference>
<dbReference type="HAMAP" id="MF_01383">
    <property type="entry name" value="PSII_PsbD_D2"/>
    <property type="match status" value="1"/>
</dbReference>
<dbReference type="InterPro" id="IPR055266">
    <property type="entry name" value="D1/D2"/>
</dbReference>
<dbReference type="InterPro" id="IPR036854">
    <property type="entry name" value="Photo_II_D1/D2_sf"/>
</dbReference>
<dbReference type="InterPro" id="IPR000484">
    <property type="entry name" value="Photo_RC_L/M"/>
</dbReference>
<dbReference type="InterPro" id="IPR055265">
    <property type="entry name" value="Photo_RC_L/M_CS"/>
</dbReference>
<dbReference type="InterPro" id="IPR005868">
    <property type="entry name" value="PSII_PsbD/D2"/>
</dbReference>
<dbReference type="NCBIfam" id="TIGR01152">
    <property type="entry name" value="psbD"/>
    <property type="match status" value="1"/>
</dbReference>
<dbReference type="PANTHER" id="PTHR33149:SF12">
    <property type="entry name" value="PHOTOSYSTEM II D2 PROTEIN"/>
    <property type="match status" value="1"/>
</dbReference>
<dbReference type="PANTHER" id="PTHR33149">
    <property type="entry name" value="PHOTOSYSTEM II PROTEIN D1"/>
    <property type="match status" value="1"/>
</dbReference>
<dbReference type="Pfam" id="PF00124">
    <property type="entry name" value="Photo_RC"/>
    <property type="match status" value="1"/>
</dbReference>
<dbReference type="PRINTS" id="PR00256">
    <property type="entry name" value="REACTNCENTRE"/>
</dbReference>
<dbReference type="SUPFAM" id="SSF81483">
    <property type="entry name" value="Bacterial photosystem II reaction centre, L and M subunits"/>
    <property type="match status" value="1"/>
</dbReference>
<dbReference type="PROSITE" id="PS00244">
    <property type="entry name" value="REACTION_CENTER"/>
    <property type="match status" value="1"/>
</dbReference>
<comment type="function">
    <text evidence="2">Photosystem II (PSII) is a light-driven water:plastoquinone oxidoreductase that uses light energy to abstract electrons from H(2)O, generating O(2) and a proton gradient subsequently used for ATP formation. It consists of a core antenna complex that captures photons, and an electron transfer chain that converts photonic excitation into a charge separation. The D1/D2 (PsbA/PsbD) reaction center heterodimer binds P680, the primary electron donor of PSII as well as several subsequent electron acceptors. D2 is needed for assembly of a stable PSII complex.</text>
</comment>
<comment type="catalytic activity">
    <reaction evidence="2">
        <text>2 a plastoquinone + 4 hnu + 2 H2O = 2 a plastoquinol + O2</text>
        <dbReference type="Rhea" id="RHEA:36359"/>
        <dbReference type="Rhea" id="RHEA-COMP:9561"/>
        <dbReference type="Rhea" id="RHEA-COMP:9562"/>
        <dbReference type="ChEBI" id="CHEBI:15377"/>
        <dbReference type="ChEBI" id="CHEBI:15379"/>
        <dbReference type="ChEBI" id="CHEBI:17757"/>
        <dbReference type="ChEBI" id="CHEBI:30212"/>
        <dbReference type="ChEBI" id="CHEBI:62192"/>
        <dbReference type="EC" id="1.10.3.9"/>
    </reaction>
</comment>
<comment type="cofactor">
    <text evidence="2">The D1/D2 heterodimer binds P680, chlorophylls that are the primary electron donor of PSII, and subsequent electron acceptors. It shares a non-heme iron and each subunit binds pheophytin, quinone, additional chlorophylls, carotenoids and lipids. There is also a Cl(-1) ion associated with D1 and D2, which is required for oxygen evolution. The PSII complex binds additional chlorophylls, carotenoids and specific lipids.</text>
</comment>
<comment type="subunit">
    <text evidence="2">PSII is composed of 1 copy each of membrane proteins PsbA, PsbB, PsbC, PsbD, PsbE, PsbF, PsbH, PsbI, PsbJ, PsbK, PsbL, PsbM, PsbT, PsbX, PsbY, PsbZ, Psb30/Ycf12, at least 3 peripheral proteins of the oxygen-evolving complex and a large number of cofactors. It forms dimeric complexes.</text>
</comment>
<comment type="subcellular location">
    <subcellularLocation>
        <location evidence="2">Plastid</location>
        <location evidence="2">Chloroplast thylakoid membrane</location>
        <topology evidence="2">Multi-pass membrane protein</topology>
    </subcellularLocation>
</comment>
<comment type="miscellaneous">
    <text evidence="2">2 of the reaction center chlorophylls (ChlD1 and ChlD2) are entirely coordinated by water.</text>
</comment>
<comment type="similarity">
    <text evidence="2">Belongs to the reaction center PufL/M/PsbA/D family.</text>
</comment>
<sequence length="353" mass="39550">MTIALGKFTKDEKDLFDIMDDWLRRDRFVFVGWSGLLLFPCAYFAVGGWFTGTTFVTSWYTHGLASSYLEGCNFLTAAVSTPANSLAHSLLLLWGPEAQGDFTRWCQLGGLWTFVALHGAFGLIGFMLRQFELARSVQLRPYNAIAFSGPIAVFVSVFLIYPLGQSGWFFAPSFGVAAIFRFILFFQGFHNWTLNPFHMMGVAGVLGAALLCAIHGATVENTLFEDGDGANTFRAFNPTQAEETYSMVTANRFWSQIFGVAFSNKRWLHFFMLFVPVTGLWMSALGVVGLALNLRAYDFVSQEIRAAEDPEFETFYTKNILLNEGIRAWMAAQDQPHENLIFPEEVLPRGNAL</sequence>